<gene>
    <name evidence="1" type="primary">mgsA</name>
    <name type="ordered locus">BCA_1592</name>
</gene>
<sequence length="131" mass="14686">MKIALIAHDKKKDDMVSFAYAYKPIFEQHELFATGTTGLRIMEATGLVVTRYQSGPLGGDQEIGAMIAKNDLDMVIFFRDPLTAQPHEPDVNALLRLCDVYAIPLATNMASAEMLMHALERGDLDYRKLRK</sequence>
<name>MGSA_BACC3</name>
<protein>
    <recommendedName>
        <fullName evidence="1">Methylglyoxal synthase</fullName>
        <shortName evidence="1">MGS</shortName>
        <ecNumber evidence="1">4.2.3.3</ecNumber>
    </recommendedName>
</protein>
<keyword id="KW-0456">Lyase</keyword>
<accession>C1EN30</accession>
<reference key="1">
    <citation type="submission" date="2009-02" db="EMBL/GenBank/DDBJ databases">
        <title>Genome sequence of Bacillus cereus 03BB102.</title>
        <authorList>
            <person name="Dodson R.J."/>
            <person name="Jackson P."/>
            <person name="Munk A.C."/>
            <person name="Brettin T."/>
            <person name="Bruce D."/>
            <person name="Detter C."/>
            <person name="Tapia R."/>
            <person name="Han C."/>
            <person name="Sutton G."/>
            <person name="Sims D."/>
        </authorList>
    </citation>
    <scope>NUCLEOTIDE SEQUENCE [LARGE SCALE GENOMIC DNA]</scope>
    <source>
        <strain>03BB102</strain>
    </source>
</reference>
<comment type="function">
    <text evidence="1">Catalyzes the formation of methylglyoxal from dihydroxyacetone phosphate.</text>
</comment>
<comment type="catalytic activity">
    <reaction evidence="1">
        <text>dihydroxyacetone phosphate = methylglyoxal + phosphate</text>
        <dbReference type="Rhea" id="RHEA:17937"/>
        <dbReference type="ChEBI" id="CHEBI:17158"/>
        <dbReference type="ChEBI" id="CHEBI:43474"/>
        <dbReference type="ChEBI" id="CHEBI:57642"/>
        <dbReference type="EC" id="4.2.3.3"/>
    </reaction>
</comment>
<comment type="similarity">
    <text evidence="1">Belongs to the methylglyoxal synthase family.</text>
</comment>
<evidence type="ECO:0000255" key="1">
    <source>
        <dbReference type="HAMAP-Rule" id="MF_00549"/>
    </source>
</evidence>
<dbReference type="EC" id="4.2.3.3" evidence="1"/>
<dbReference type="EMBL" id="CP001407">
    <property type="protein sequence ID" value="ACO28230.1"/>
    <property type="molecule type" value="Genomic_DNA"/>
</dbReference>
<dbReference type="RefSeq" id="WP_000684755.1">
    <property type="nucleotide sequence ID" value="NZ_CP009318.1"/>
</dbReference>
<dbReference type="SMR" id="C1EN30"/>
<dbReference type="KEGG" id="bcx:BCA_1592"/>
<dbReference type="PATRIC" id="fig|572264.18.peg.1540"/>
<dbReference type="Proteomes" id="UP000002210">
    <property type="component" value="Chromosome"/>
</dbReference>
<dbReference type="GO" id="GO:0005829">
    <property type="term" value="C:cytosol"/>
    <property type="evidence" value="ECO:0007669"/>
    <property type="project" value="TreeGrafter"/>
</dbReference>
<dbReference type="GO" id="GO:0008929">
    <property type="term" value="F:methylglyoxal synthase activity"/>
    <property type="evidence" value="ECO:0007669"/>
    <property type="project" value="UniProtKB-UniRule"/>
</dbReference>
<dbReference type="GO" id="GO:0019242">
    <property type="term" value="P:methylglyoxal biosynthetic process"/>
    <property type="evidence" value="ECO:0007669"/>
    <property type="project" value="UniProtKB-UniRule"/>
</dbReference>
<dbReference type="CDD" id="cd01422">
    <property type="entry name" value="MGS"/>
    <property type="match status" value="1"/>
</dbReference>
<dbReference type="FunFam" id="3.40.50.1380:FF:000006">
    <property type="entry name" value="Methylglyoxal synthase"/>
    <property type="match status" value="1"/>
</dbReference>
<dbReference type="Gene3D" id="3.40.50.1380">
    <property type="entry name" value="Methylglyoxal synthase-like domain"/>
    <property type="match status" value="1"/>
</dbReference>
<dbReference type="HAMAP" id="MF_00549">
    <property type="entry name" value="Methylglyoxal_synth"/>
    <property type="match status" value="1"/>
</dbReference>
<dbReference type="InterPro" id="IPR004363">
    <property type="entry name" value="Methylgl_synth"/>
</dbReference>
<dbReference type="InterPro" id="IPR018148">
    <property type="entry name" value="Methylglyoxal_synth_AS"/>
</dbReference>
<dbReference type="InterPro" id="IPR011607">
    <property type="entry name" value="MGS-like_dom"/>
</dbReference>
<dbReference type="InterPro" id="IPR036914">
    <property type="entry name" value="MGS-like_dom_sf"/>
</dbReference>
<dbReference type="NCBIfam" id="TIGR00160">
    <property type="entry name" value="MGSA"/>
    <property type="match status" value="1"/>
</dbReference>
<dbReference type="NCBIfam" id="NF003559">
    <property type="entry name" value="PRK05234.1"/>
    <property type="match status" value="1"/>
</dbReference>
<dbReference type="PANTHER" id="PTHR30492">
    <property type="entry name" value="METHYLGLYOXAL SYNTHASE"/>
    <property type="match status" value="1"/>
</dbReference>
<dbReference type="PANTHER" id="PTHR30492:SF0">
    <property type="entry name" value="METHYLGLYOXAL SYNTHASE"/>
    <property type="match status" value="1"/>
</dbReference>
<dbReference type="Pfam" id="PF02142">
    <property type="entry name" value="MGS"/>
    <property type="match status" value="1"/>
</dbReference>
<dbReference type="PIRSF" id="PIRSF006614">
    <property type="entry name" value="Methylglyox_syn"/>
    <property type="match status" value="1"/>
</dbReference>
<dbReference type="SMART" id="SM00851">
    <property type="entry name" value="MGS"/>
    <property type="match status" value="1"/>
</dbReference>
<dbReference type="SUPFAM" id="SSF52335">
    <property type="entry name" value="Methylglyoxal synthase-like"/>
    <property type="match status" value="1"/>
</dbReference>
<dbReference type="PROSITE" id="PS01335">
    <property type="entry name" value="METHYLGLYOXAL_SYNTH"/>
    <property type="match status" value="1"/>
</dbReference>
<dbReference type="PROSITE" id="PS51855">
    <property type="entry name" value="MGS"/>
    <property type="match status" value="1"/>
</dbReference>
<feature type="chain" id="PRO_1000146619" description="Methylglyoxal synthase">
    <location>
        <begin position="1"/>
        <end position="131"/>
    </location>
</feature>
<feature type="domain" description="MGS-like" evidence="1">
    <location>
        <begin position="1"/>
        <end position="131"/>
    </location>
</feature>
<feature type="active site" description="Proton donor/acceptor" evidence="1">
    <location>
        <position position="60"/>
    </location>
</feature>
<feature type="binding site" evidence="1">
    <location>
        <position position="8"/>
    </location>
    <ligand>
        <name>substrate</name>
    </ligand>
</feature>
<feature type="binding site" evidence="1">
    <location>
        <position position="12"/>
    </location>
    <ligand>
        <name>substrate</name>
    </ligand>
</feature>
<feature type="binding site" evidence="1">
    <location>
        <begin position="34"/>
        <end position="37"/>
    </location>
    <ligand>
        <name>substrate</name>
    </ligand>
</feature>
<feature type="binding site" evidence="1">
    <location>
        <begin position="54"/>
        <end position="55"/>
    </location>
    <ligand>
        <name>substrate</name>
    </ligand>
</feature>
<feature type="binding site" evidence="1">
    <location>
        <position position="87"/>
    </location>
    <ligand>
        <name>substrate</name>
    </ligand>
</feature>
<organism>
    <name type="scientific">Bacillus cereus (strain 03BB102)</name>
    <dbReference type="NCBI Taxonomy" id="572264"/>
    <lineage>
        <taxon>Bacteria</taxon>
        <taxon>Bacillati</taxon>
        <taxon>Bacillota</taxon>
        <taxon>Bacilli</taxon>
        <taxon>Bacillales</taxon>
        <taxon>Bacillaceae</taxon>
        <taxon>Bacillus</taxon>
        <taxon>Bacillus cereus group</taxon>
    </lineage>
</organism>
<proteinExistence type="inferred from homology"/>